<dbReference type="EC" id="2.8.1.6"/>
<dbReference type="EC" id="2.6.1.62"/>
<dbReference type="EMBL" id="AP006841">
    <property type="protein sequence ID" value="BAD48352.1"/>
    <property type="molecule type" value="Genomic_DNA"/>
</dbReference>
<dbReference type="RefSeq" id="WP_011202495.1">
    <property type="nucleotide sequence ID" value="NC_006347.1"/>
</dbReference>
<dbReference type="RefSeq" id="YP_098886.1">
    <property type="nucleotide sequence ID" value="NC_006347.1"/>
</dbReference>
<dbReference type="SMR" id="Q64VX4"/>
<dbReference type="STRING" id="295405.BF1603"/>
<dbReference type="KEGG" id="bfr:BF1603"/>
<dbReference type="PATRIC" id="fig|295405.11.peg.1560"/>
<dbReference type="HOGENOM" id="CLU_016922_9_1_10"/>
<dbReference type="OrthoDB" id="9807885at2"/>
<dbReference type="UniPathway" id="UPA00078">
    <property type="reaction ID" value="UER00160"/>
</dbReference>
<dbReference type="UniPathway" id="UPA00078">
    <property type="reaction ID" value="UER00162"/>
</dbReference>
<dbReference type="Proteomes" id="UP000002197">
    <property type="component" value="Chromosome"/>
</dbReference>
<dbReference type="GO" id="GO:0005737">
    <property type="term" value="C:cytoplasm"/>
    <property type="evidence" value="ECO:0007669"/>
    <property type="project" value="UniProtKB-UniRule"/>
</dbReference>
<dbReference type="GO" id="GO:0051537">
    <property type="term" value="F:2 iron, 2 sulfur cluster binding"/>
    <property type="evidence" value="ECO:0007669"/>
    <property type="project" value="UniProtKB-KW"/>
</dbReference>
<dbReference type="GO" id="GO:0051539">
    <property type="term" value="F:4 iron, 4 sulfur cluster binding"/>
    <property type="evidence" value="ECO:0007669"/>
    <property type="project" value="UniProtKB-KW"/>
</dbReference>
<dbReference type="GO" id="GO:0004015">
    <property type="term" value="F:adenosylmethionine-8-amino-7-oxononanoate transaminase activity"/>
    <property type="evidence" value="ECO:0007669"/>
    <property type="project" value="UniProtKB-UniRule"/>
</dbReference>
<dbReference type="GO" id="GO:0004076">
    <property type="term" value="F:biotin synthase activity"/>
    <property type="evidence" value="ECO:0007669"/>
    <property type="project" value="UniProtKB-UniRule"/>
</dbReference>
<dbReference type="GO" id="GO:0005506">
    <property type="term" value="F:iron ion binding"/>
    <property type="evidence" value="ECO:0007669"/>
    <property type="project" value="UniProtKB-UniRule"/>
</dbReference>
<dbReference type="GO" id="GO:0030170">
    <property type="term" value="F:pyridoxal phosphate binding"/>
    <property type="evidence" value="ECO:0007669"/>
    <property type="project" value="UniProtKB-UniRule"/>
</dbReference>
<dbReference type="GO" id="GO:0009102">
    <property type="term" value="P:biotin biosynthetic process"/>
    <property type="evidence" value="ECO:0007669"/>
    <property type="project" value="UniProtKB-UniRule"/>
</dbReference>
<dbReference type="CDD" id="cd00610">
    <property type="entry name" value="OAT_like"/>
    <property type="match status" value="1"/>
</dbReference>
<dbReference type="CDD" id="cd01335">
    <property type="entry name" value="Radical_SAM"/>
    <property type="match status" value="1"/>
</dbReference>
<dbReference type="FunFam" id="3.40.640.10:FF:000041">
    <property type="entry name" value="Adenosylmethionine-8-amino-7-oxononanoate aminotransferase"/>
    <property type="match status" value="1"/>
</dbReference>
<dbReference type="FunFam" id="3.20.20.70:FF:000026">
    <property type="entry name" value="Biotin synthase"/>
    <property type="match status" value="1"/>
</dbReference>
<dbReference type="Gene3D" id="3.20.20.70">
    <property type="entry name" value="Aldolase class I"/>
    <property type="match status" value="1"/>
</dbReference>
<dbReference type="Gene3D" id="3.90.1150.10">
    <property type="entry name" value="Aspartate Aminotransferase, domain 1"/>
    <property type="match status" value="1"/>
</dbReference>
<dbReference type="Gene3D" id="3.40.640.10">
    <property type="entry name" value="Type I PLP-dependent aspartate aminotransferase-like (Major domain)"/>
    <property type="match status" value="1"/>
</dbReference>
<dbReference type="HAMAP" id="MF_00834">
    <property type="entry name" value="BioA"/>
    <property type="match status" value="1"/>
</dbReference>
<dbReference type="HAMAP" id="MF_01694">
    <property type="entry name" value="BioB"/>
    <property type="match status" value="1"/>
</dbReference>
<dbReference type="InterPro" id="IPR013785">
    <property type="entry name" value="Aldolase_TIM"/>
</dbReference>
<dbReference type="InterPro" id="IPR005814">
    <property type="entry name" value="Aminotrans_3"/>
</dbReference>
<dbReference type="InterPro" id="IPR049704">
    <property type="entry name" value="Aminotrans_3_PPA_site"/>
</dbReference>
<dbReference type="InterPro" id="IPR010722">
    <property type="entry name" value="BATS_dom"/>
</dbReference>
<dbReference type="InterPro" id="IPR005815">
    <property type="entry name" value="BioA"/>
</dbReference>
<dbReference type="InterPro" id="IPR002684">
    <property type="entry name" value="Biotin_synth/BioAB"/>
</dbReference>
<dbReference type="InterPro" id="IPR006638">
    <property type="entry name" value="Elp3/MiaA/NifB-like_rSAM"/>
</dbReference>
<dbReference type="InterPro" id="IPR015424">
    <property type="entry name" value="PyrdxlP-dep_Trfase"/>
</dbReference>
<dbReference type="InterPro" id="IPR015421">
    <property type="entry name" value="PyrdxlP-dep_Trfase_major"/>
</dbReference>
<dbReference type="InterPro" id="IPR015422">
    <property type="entry name" value="PyrdxlP-dep_Trfase_small"/>
</dbReference>
<dbReference type="InterPro" id="IPR007197">
    <property type="entry name" value="rSAM"/>
</dbReference>
<dbReference type="NCBIfam" id="TIGR00508">
    <property type="entry name" value="bioA"/>
    <property type="match status" value="1"/>
</dbReference>
<dbReference type="NCBIfam" id="TIGR00433">
    <property type="entry name" value="bioB"/>
    <property type="match status" value="1"/>
</dbReference>
<dbReference type="NCBIfam" id="NF004624">
    <property type="entry name" value="PRK05964.1"/>
    <property type="match status" value="1"/>
</dbReference>
<dbReference type="NCBIfam" id="NF005940">
    <property type="entry name" value="PRK07986.1"/>
    <property type="match status" value="1"/>
</dbReference>
<dbReference type="PANTHER" id="PTHR42684">
    <property type="entry name" value="ADENOSYLMETHIONINE-8-AMINO-7-OXONONANOATE AMINOTRANSFERASE"/>
    <property type="match status" value="1"/>
</dbReference>
<dbReference type="PANTHER" id="PTHR42684:SF17">
    <property type="entry name" value="ADENOSYLMETHIONINE-8-AMINO-7-OXONONANOATE AMINOTRANSFERASE"/>
    <property type="match status" value="1"/>
</dbReference>
<dbReference type="Pfam" id="PF00202">
    <property type="entry name" value="Aminotran_3"/>
    <property type="match status" value="1"/>
</dbReference>
<dbReference type="Pfam" id="PF06968">
    <property type="entry name" value="BATS"/>
    <property type="match status" value="1"/>
</dbReference>
<dbReference type="Pfam" id="PF04055">
    <property type="entry name" value="Radical_SAM"/>
    <property type="match status" value="1"/>
</dbReference>
<dbReference type="SFLD" id="SFLDG01278">
    <property type="entry name" value="biotin_synthase_like"/>
    <property type="match status" value="1"/>
</dbReference>
<dbReference type="SFLD" id="SFLDS00029">
    <property type="entry name" value="Radical_SAM"/>
    <property type="match status" value="1"/>
</dbReference>
<dbReference type="SMART" id="SM00876">
    <property type="entry name" value="BATS"/>
    <property type="match status" value="1"/>
</dbReference>
<dbReference type="SMART" id="SM00729">
    <property type="entry name" value="Elp3"/>
    <property type="match status" value="1"/>
</dbReference>
<dbReference type="SUPFAM" id="SSF53383">
    <property type="entry name" value="PLP-dependent transferases"/>
    <property type="match status" value="1"/>
</dbReference>
<dbReference type="SUPFAM" id="SSF102114">
    <property type="entry name" value="Radical SAM enzymes"/>
    <property type="match status" value="1"/>
</dbReference>
<dbReference type="PROSITE" id="PS00600">
    <property type="entry name" value="AA_TRANSFER_CLASS_3"/>
    <property type="match status" value="1"/>
</dbReference>
<dbReference type="PROSITE" id="PS51918">
    <property type="entry name" value="RADICAL_SAM"/>
    <property type="match status" value="1"/>
</dbReference>
<proteinExistence type="inferred from homology"/>
<reference key="1">
    <citation type="journal article" date="2004" name="Proc. Natl. Acad. Sci. U.S.A.">
        <title>Genomic analysis of Bacteroides fragilis reveals extensive DNA inversions regulating cell surface adaptation.</title>
        <authorList>
            <person name="Kuwahara T."/>
            <person name="Yamashita A."/>
            <person name="Hirakawa H."/>
            <person name="Nakayama H."/>
            <person name="Toh H."/>
            <person name="Okada N."/>
            <person name="Kuhara S."/>
            <person name="Hattori M."/>
            <person name="Hayashi T."/>
            <person name="Ohnishi Y."/>
        </authorList>
    </citation>
    <scope>NUCLEOTIDE SEQUENCE [LARGE SCALE GENOMIC DNA]</scope>
    <source>
        <strain>YCH46</strain>
    </source>
</reference>
<keyword id="KW-0001">2Fe-2S</keyword>
<keyword id="KW-0004">4Fe-4S</keyword>
<keyword id="KW-0032">Aminotransferase</keyword>
<keyword id="KW-0093">Biotin biosynthesis</keyword>
<keyword id="KW-0408">Iron</keyword>
<keyword id="KW-0411">Iron-sulfur</keyword>
<keyword id="KW-0479">Metal-binding</keyword>
<keyword id="KW-0511">Multifunctional enzyme</keyword>
<keyword id="KW-0663">Pyridoxal phosphate</keyword>
<keyword id="KW-0949">S-adenosyl-L-methionine</keyword>
<keyword id="KW-0808">Transferase</keyword>
<name>BIOAB_BACFR</name>
<gene>
    <name type="primary">bioB</name>
    <name type="ordered locus">BF1603</name>
</gene>
<comment type="function">
    <text evidence="1">Catalyzes two activities which are involved in the biotine biosynthesis: the conversion of dethiobiotin (DTB) to biotin by the insertion of a sulfur atom into dethiobiotin via a radical-based mechanism, and the transfer of the alpha-amino group from S-adenosyl-L-methionine (SAM) to 7-keto-8-aminopelargonic acid (KAPA) to form 7,8-diaminopelargonic acid (DAPA).</text>
</comment>
<comment type="catalytic activity">
    <reaction>
        <text>(4R,5S)-dethiobiotin + (sulfur carrier)-SH + 2 reduced [2Fe-2S]-[ferredoxin] + 2 S-adenosyl-L-methionine = (sulfur carrier)-H + biotin + 2 5'-deoxyadenosine + 2 L-methionine + 2 oxidized [2Fe-2S]-[ferredoxin]</text>
        <dbReference type="Rhea" id="RHEA:22060"/>
        <dbReference type="Rhea" id="RHEA-COMP:10000"/>
        <dbReference type="Rhea" id="RHEA-COMP:10001"/>
        <dbReference type="Rhea" id="RHEA-COMP:14737"/>
        <dbReference type="Rhea" id="RHEA-COMP:14739"/>
        <dbReference type="ChEBI" id="CHEBI:17319"/>
        <dbReference type="ChEBI" id="CHEBI:29917"/>
        <dbReference type="ChEBI" id="CHEBI:33737"/>
        <dbReference type="ChEBI" id="CHEBI:33738"/>
        <dbReference type="ChEBI" id="CHEBI:57586"/>
        <dbReference type="ChEBI" id="CHEBI:57844"/>
        <dbReference type="ChEBI" id="CHEBI:59789"/>
        <dbReference type="ChEBI" id="CHEBI:64428"/>
        <dbReference type="ChEBI" id="CHEBI:149473"/>
        <dbReference type="EC" id="2.8.1.6"/>
    </reaction>
</comment>
<comment type="catalytic activity">
    <reaction>
        <text>(8S)-8-amino-7-oxononanoate + S-adenosyl-L-methionine = S-adenosyl-4-methylsulfanyl-2-oxobutanoate + (7R,8S)-7,8-diammoniononanoate</text>
        <dbReference type="Rhea" id="RHEA:16861"/>
        <dbReference type="ChEBI" id="CHEBI:16490"/>
        <dbReference type="ChEBI" id="CHEBI:59789"/>
        <dbReference type="ChEBI" id="CHEBI:149468"/>
        <dbReference type="ChEBI" id="CHEBI:149469"/>
        <dbReference type="EC" id="2.6.1.62"/>
    </reaction>
</comment>
<comment type="cofactor">
    <cofactor evidence="1">
        <name>[4Fe-4S] cluster</name>
        <dbReference type="ChEBI" id="CHEBI:49883"/>
    </cofactor>
    <text evidence="1">Binds 1 [4Fe-4S] cluster. The cluster is coordinated with 3 cysteines and an exchangeable S-adenosyl-L-methionine.</text>
</comment>
<comment type="cofactor">
    <cofactor evidence="1">
        <name>[2Fe-2S] cluster</name>
        <dbReference type="ChEBI" id="CHEBI:190135"/>
    </cofactor>
    <text evidence="1">Binds 1 [2Fe-2S] cluster. The cluster is coordinated with 3 cysteines and 1 arginine.</text>
</comment>
<comment type="cofactor">
    <cofactor evidence="1">
        <name>pyridoxal 5'-phosphate</name>
        <dbReference type="ChEBI" id="CHEBI:597326"/>
    </cofactor>
</comment>
<comment type="pathway">
    <text>Cofactor biosynthesis; biotin biosynthesis; biotin from 7,8-diaminononanoate: step 2/2.</text>
</comment>
<comment type="pathway">
    <text>Cofactor biosynthesis; biotin biosynthesis; 7,8-diaminononanoate from 8-amino-7-oxononanoate (SAM route): step 1/1.</text>
</comment>
<comment type="subunit">
    <text evidence="1">Homodimer.</text>
</comment>
<comment type="similarity">
    <text evidence="3">In the N-terminal section; belongs to the radical SAM superfamily. Biotin synthase family.</text>
</comment>
<comment type="similarity">
    <text evidence="3">In the C-terminal section; belongs to the class-III pyridoxal-phosphate-dependent aminotransferase family. BioA subfamily.</text>
</comment>
<sequence length="748" mass="83163">MTIEEIKNQVLQGTAISREQAGWLALYPRKEELYDAAHDITTACASQEFDMCSIINARSGRCPENCKWCAQSSHYKTKADVYDLVSAEECLRQAKYNEAQGVNRFSLVTSGRKPSPKNMKELCVAVRRMRRHSSIRLCASLGLLDEEELQALYDAGVTRYHCNLETAPSHFDSLCTTHTQEQKLKTLYAARRVGMDLCCGGIIGMGETVEQRIEFAFTLRDLNIQSIPINLLQPIPGTPLEHQSPLSEEEILTTVALFRFINPAAYLRFAGGRSQLTPEAVRKSLYIGINSAIVGDLLTTLGSKVSDDKEMILSEGYHFADSQFDREHLWHPYTSTSNPLPVYKVKRADGATITLESGQTLIEGMSSWWCAVHGYNHPILNQAVQDQLSRMSHVMFGGLTHDPAIELGKLLLPLVPPSMQKIFYADSGSVAVEVALKMAVQYWYAAGKPEKNNFVTIRNGYHGDTWNAMSVCDPVTGMHSIFGSALPIRHFLPAPSSRFGDEWNPEDIRPLEHLLEKHADELAAFILEPIVQGAGGMRFYHPEYLREAARLCHRYGVLLIFDEIATGFGRTGKLFAWEHAGVEPDIMCIGKALTGGYMTLSAVLTTNEVADCISNHAPGAFMHGPTFMGNPLACAVACASVRLLLTSGWQENVKRIEAQLNRELAPARELPQVADVRVLGAIGVIEMKEPVNMAYLQRRFVEEGIWLRPFGKLIYVMPPFIITPEQLTKLTEGMIRIISNGLPGSQTK</sequence>
<feature type="chain" id="PRO_0000381228" description="Biotin biosynthesis bifunctional protein BioAB">
    <location>
        <begin position="1"/>
        <end position="748"/>
    </location>
</feature>
<feature type="domain" description="Radical SAM core" evidence="2">
    <location>
        <begin position="44"/>
        <end position="270"/>
    </location>
</feature>
<feature type="binding site" evidence="1">
    <location>
        <position position="62"/>
    </location>
    <ligand>
        <name>[4Fe-4S] cluster</name>
        <dbReference type="ChEBI" id="CHEBI:49883"/>
        <note>4Fe-4S-S-AdoMet</note>
    </ligand>
</feature>
<feature type="binding site" evidence="1">
    <location>
        <position position="66"/>
    </location>
    <ligand>
        <name>[4Fe-4S] cluster</name>
        <dbReference type="ChEBI" id="CHEBI:49883"/>
        <note>4Fe-4S-S-AdoMet</note>
    </ligand>
</feature>
<feature type="binding site" evidence="1">
    <location>
        <position position="69"/>
    </location>
    <ligand>
        <name>[4Fe-4S] cluster</name>
        <dbReference type="ChEBI" id="CHEBI:49883"/>
        <note>4Fe-4S-S-AdoMet</note>
    </ligand>
</feature>
<feature type="binding site" evidence="1">
    <location>
        <position position="106"/>
    </location>
    <ligand>
        <name>[2Fe-2S] cluster</name>
        <dbReference type="ChEBI" id="CHEBI:190135"/>
    </ligand>
</feature>
<feature type="binding site" evidence="1">
    <location>
        <position position="138"/>
    </location>
    <ligand>
        <name>[2Fe-2S] cluster</name>
        <dbReference type="ChEBI" id="CHEBI:190135"/>
    </ligand>
</feature>
<feature type="binding site" evidence="1">
    <location>
        <position position="198"/>
    </location>
    <ligand>
        <name>[2Fe-2S] cluster</name>
        <dbReference type="ChEBI" id="CHEBI:190135"/>
    </ligand>
</feature>
<feature type="binding site" evidence="1">
    <location>
        <position position="268"/>
    </location>
    <ligand>
        <name>[2Fe-2S] cluster</name>
        <dbReference type="ChEBI" id="CHEBI:190135"/>
    </ligand>
</feature>
<feature type="binding site" evidence="1">
    <location>
        <position position="368"/>
    </location>
    <ligand>
        <name>(8S)-8-amino-7-oxononanoate</name>
        <dbReference type="ChEBI" id="CHEBI:149468"/>
    </ligand>
</feature>
<feature type="binding site">
    <location>
        <begin position="428"/>
        <end position="429"/>
    </location>
    <ligand>
        <name>pyridoxal 5'-phosphate</name>
        <dbReference type="ChEBI" id="CHEBI:597326"/>
    </ligand>
</feature>
<feature type="binding site" evidence="1">
    <location>
        <position position="461"/>
    </location>
    <ligand>
        <name>(8S)-8-amino-7-oxononanoate</name>
        <dbReference type="ChEBI" id="CHEBI:149468"/>
    </ligand>
</feature>
<feature type="binding site" evidence="1">
    <location>
        <position position="562"/>
    </location>
    <ligand>
        <name>pyridoxal 5'-phosphate</name>
        <dbReference type="ChEBI" id="CHEBI:597326"/>
    </ligand>
</feature>
<feature type="binding site" evidence="1">
    <location>
        <position position="591"/>
    </location>
    <ligand>
        <name>(8S)-8-amino-7-oxononanoate</name>
        <dbReference type="ChEBI" id="CHEBI:149468"/>
    </ligand>
</feature>
<feature type="binding site" evidence="1">
    <location>
        <position position="624"/>
    </location>
    <ligand>
        <name>(8S)-8-amino-7-oxononanoate</name>
        <dbReference type="ChEBI" id="CHEBI:149468"/>
    </ligand>
</feature>
<feature type="binding site" evidence="1">
    <location>
        <begin position="625"/>
        <end position="626"/>
    </location>
    <ligand>
        <name>pyridoxal 5'-phosphate</name>
        <dbReference type="ChEBI" id="CHEBI:597326"/>
    </ligand>
</feature>
<feature type="binding site" evidence="1">
    <location>
        <position position="708"/>
    </location>
    <ligand>
        <name>(8S)-8-amino-7-oxononanoate</name>
        <dbReference type="ChEBI" id="CHEBI:149468"/>
    </ligand>
</feature>
<feature type="site" description="Participates in the substrate recognition with KAPA and in a stacking interaction with the adenine ring of SAM" evidence="1">
    <location>
        <position position="333"/>
    </location>
</feature>
<feature type="modified residue" description="N6-(pyridoxal phosphate)lysine" evidence="1">
    <location>
        <position position="591"/>
    </location>
</feature>
<protein>
    <recommendedName>
        <fullName>Biotin biosynthesis bifunctional protein BioAB</fullName>
    </recommendedName>
    <domain>
        <recommendedName>
            <fullName>Biotin synthase BioB</fullName>
            <ecNumber>2.8.1.6</ecNumber>
        </recommendedName>
    </domain>
    <domain>
        <recommendedName>
            <fullName>Adenosylmethionine-8-amino-7-oxononanoate aminotransferase BioA</fullName>
            <ecNumber>2.6.1.62</ecNumber>
        </recommendedName>
        <alternativeName>
            <fullName>7,8-diamino-pelargonic acid aminotransferase</fullName>
            <shortName>DAPA AT</shortName>
            <shortName>DAPA aminotransferase</shortName>
        </alternativeName>
        <alternativeName>
            <fullName>7,8-diaminononanoate synthase</fullName>
            <shortName>DANS</shortName>
        </alternativeName>
        <alternativeName>
            <fullName>Diaminopelargonic acid synthase</fullName>
        </alternativeName>
    </domain>
</protein>
<accession>Q64VX4</accession>
<organism>
    <name type="scientific">Bacteroides fragilis (strain YCH46)</name>
    <dbReference type="NCBI Taxonomy" id="295405"/>
    <lineage>
        <taxon>Bacteria</taxon>
        <taxon>Pseudomonadati</taxon>
        <taxon>Bacteroidota</taxon>
        <taxon>Bacteroidia</taxon>
        <taxon>Bacteroidales</taxon>
        <taxon>Bacteroidaceae</taxon>
        <taxon>Bacteroides</taxon>
    </lineage>
</organism>
<evidence type="ECO:0000250" key="1"/>
<evidence type="ECO:0000255" key="2">
    <source>
        <dbReference type="PROSITE-ProRule" id="PRU01266"/>
    </source>
</evidence>
<evidence type="ECO:0000305" key="3"/>